<reference key="1">
    <citation type="journal article" date="2002" name="Nature">
        <title>The genome sequence of Schizosaccharomyces pombe.</title>
        <authorList>
            <person name="Wood V."/>
            <person name="Gwilliam R."/>
            <person name="Rajandream M.A."/>
            <person name="Lyne M.H."/>
            <person name="Lyne R."/>
            <person name="Stewart A."/>
            <person name="Sgouros J.G."/>
            <person name="Peat N."/>
            <person name="Hayles J."/>
            <person name="Baker S.G."/>
            <person name="Basham D."/>
            <person name="Bowman S."/>
            <person name="Brooks K."/>
            <person name="Brown D."/>
            <person name="Brown S."/>
            <person name="Chillingworth T."/>
            <person name="Churcher C.M."/>
            <person name="Collins M."/>
            <person name="Connor R."/>
            <person name="Cronin A."/>
            <person name="Davis P."/>
            <person name="Feltwell T."/>
            <person name="Fraser A."/>
            <person name="Gentles S."/>
            <person name="Goble A."/>
            <person name="Hamlin N."/>
            <person name="Harris D.E."/>
            <person name="Hidalgo J."/>
            <person name="Hodgson G."/>
            <person name="Holroyd S."/>
            <person name="Hornsby T."/>
            <person name="Howarth S."/>
            <person name="Huckle E.J."/>
            <person name="Hunt S."/>
            <person name="Jagels K."/>
            <person name="James K.D."/>
            <person name="Jones L."/>
            <person name="Jones M."/>
            <person name="Leather S."/>
            <person name="McDonald S."/>
            <person name="McLean J."/>
            <person name="Mooney P."/>
            <person name="Moule S."/>
            <person name="Mungall K.L."/>
            <person name="Murphy L.D."/>
            <person name="Niblett D."/>
            <person name="Odell C."/>
            <person name="Oliver K."/>
            <person name="O'Neil S."/>
            <person name="Pearson D."/>
            <person name="Quail M.A."/>
            <person name="Rabbinowitsch E."/>
            <person name="Rutherford K.M."/>
            <person name="Rutter S."/>
            <person name="Saunders D."/>
            <person name="Seeger K."/>
            <person name="Sharp S."/>
            <person name="Skelton J."/>
            <person name="Simmonds M.N."/>
            <person name="Squares R."/>
            <person name="Squares S."/>
            <person name="Stevens K."/>
            <person name="Taylor K."/>
            <person name="Taylor R.G."/>
            <person name="Tivey A."/>
            <person name="Walsh S.V."/>
            <person name="Warren T."/>
            <person name="Whitehead S."/>
            <person name="Woodward J.R."/>
            <person name="Volckaert G."/>
            <person name="Aert R."/>
            <person name="Robben J."/>
            <person name="Grymonprez B."/>
            <person name="Weltjens I."/>
            <person name="Vanstreels E."/>
            <person name="Rieger M."/>
            <person name="Schaefer M."/>
            <person name="Mueller-Auer S."/>
            <person name="Gabel C."/>
            <person name="Fuchs M."/>
            <person name="Duesterhoeft A."/>
            <person name="Fritzc C."/>
            <person name="Holzer E."/>
            <person name="Moestl D."/>
            <person name="Hilbert H."/>
            <person name="Borzym K."/>
            <person name="Langer I."/>
            <person name="Beck A."/>
            <person name="Lehrach H."/>
            <person name="Reinhardt R."/>
            <person name="Pohl T.M."/>
            <person name="Eger P."/>
            <person name="Zimmermann W."/>
            <person name="Wedler H."/>
            <person name="Wambutt R."/>
            <person name="Purnelle B."/>
            <person name="Goffeau A."/>
            <person name="Cadieu E."/>
            <person name="Dreano S."/>
            <person name="Gloux S."/>
            <person name="Lelaure V."/>
            <person name="Mottier S."/>
            <person name="Galibert F."/>
            <person name="Aves S.J."/>
            <person name="Xiang Z."/>
            <person name="Hunt C."/>
            <person name="Moore K."/>
            <person name="Hurst S.M."/>
            <person name="Lucas M."/>
            <person name="Rochet M."/>
            <person name="Gaillardin C."/>
            <person name="Tallada V.A."/>
            <person name="Garzon A."/>
            <person name="Thode G."/>
            <person name="Daga R.R."/>
            <person name="Cruzado L."/>
            <person name="Jimenez J."/>
            <person name="Sanchez M."/>
            <person name="del Rey F."/>
            <person name="Benito J."/>
            <person name="Dominguez A."/>
            <person name="Revuelta J.L."/>
            <person name="Moreno S."/>
            <person name="Armstrong J."/>
            <person name="Forsburg S.L."/>
            <person name="Cerutti L."/>
            <person name="Lowe T."/>
            <person name="McCombie W.R."/>
            <person name="Paulsen I."/>
            <person name="Potashkin J."/>
            <person name="Shpakovski G.V."/>
            <person name="Ussery D."/>
            <person name="Barrell B.G."/>
            <person name="Nurse P."/>
        </authorList>
    </citation>
    <scope>NUCLEOTIDE SEQUENCE [LARGE SCALE GENOMIC DNA]</scope>
    <source>
        <strain>972 / ATCC 24843</strain>
    </source>
</reference>
<reference key="2">
    <citation type="journal article" date="2006" name="Nat. Biotechnol.">
        <title>ORFeome cloning and global analysis of protein localization in the fission yeast Schizosaccharomyces pombe.</title>
        <authorList>
            <person name="Matsuyama A."/>
            <person name="Arai R."/>
            <person name="Yashiroda Y."/>
            <person name="Shirai A."/>
            <person name="Kamata A."/>
            <person name="Sekido S."/>
            <person name="Kobayashi Y."/>
            <person name="Hashimoto A."/>
            <person name="Hamamoto M."/>
            <person name="Hiraoka Y."/>
            <person name="Horinouchi S."/>
            <person name="Yoshida M."/>
        </authorList>
    </citation>
    <scope>SUBCELLULAR LOCATION [LARGE SCALE ANALYSIS]</scope>
</reference>
<reference key="3">
    <citation type="journal article" date="2007" name="Curr. Genet.">
        <title>Six new amino acid-auxotrophic markers for targeted gene integration and disruption in fission yeast.</title>
        <authorList>
            <person name="Ma Y."/>
            <person name="Sugiura R."/>
            <person name="Saito M."/>
            <person name="Koike A."/>
            <person name="Sio S.O."/>
            <person name="Fujita Y."/>
            <person name="Takegawa K."/>
            <person name="Kuno T."/>
        </authorList>
    </citation>
    <scope>PATHWAY</scope>
    <scope>MUTAGENESIS OF GLY-426</scope>
</reference>
<reference key="4">
    <citation type="journal article" date="2017" name="Nat. Chem. Biol.">
        <title>Parallel evolution of non-homologous isofunctional enzymes in methionine biosynthesis.</title>
        <authorList>
            <person name="Bastard K."/>
            <person name="Perret A."/>
            <person name="Mariage A."/>
            <person name="Bessonnet T."/>
            <person name="Pinet-Turpault A."/>
            <person name="Petit J.L."/>
            <person name="Darii E."/>
            <person name="Bazire P."/>
            <person name="Vergne-Vaxelaire C."/>
            <person name="Brewee C."/>
            <person name="Debard A."/>
            <person name="Pellouin V."/>
            <person name="Besnard-Gonnet M."/>
            <person name="Artiguenave F."/>
            <person name="Medigue C."/>
            <person name="Vallenet D."/>
            <person name="Danchin A."/>
            <person name="Zaparucha A."/>
            <person name="Weissenbach J."/>
            <person name="Salanoubat M."/>
            <person name="de Berardinis V."/>
        </authorList>
    </citation>
    <scope>FUNCTION</scope>
    <scope>CATALYTIC ACTIVITY</scope>
    <scope>BIOPHYSICOCHEMICAL PROPERTIES</scope>
    <scope>PATHWAY</scope>
</reference>
<proteinExistence type="evidence at protein level"/>
<protein>
    <recommendedName>
        <fullName evidence="9">Serine O-succinyltransferase</fullName>
        <shortName evidence="8">SST</shortName>
        <ecNumber evidence="6">2.3.1.-</ecNumber>
    </recommendedName>
</protein>
<organism>
    <name type="scientific">Schizosaccharomyces pombe (strain 972 / ATCC 24843)</name>
    <name type="common">Fission yeast</name>
    <dbReference type="NCBI Taxonomy" id="284812"/>
    <lineage>
        <taxon>Eukaryota</taxon>
        <taxon>Fungi</taxon>
        <taxon>Dikarya</taxon>
        <taxon>Ascomycota</taxon>
        <taxon>Taphrinomycotina</taxon>
        <taxon>Schizosaccharomycetes</taxon>
        <taxon>Schizosaccharomycetales</taxon>
        <taxon>Schizosaccharomycetaceae</taxon>
        <taxon>Schizosaccharomyces</taxon>
    </lineage>
</organism>
<dbReference type="EC" id="2.3.1.-" evidence="6"/>
<dbReference type="EMBL" id="CU329671">
    <property type="protein sequence ID" value="CAB53733.1"/>
    <property type="molecule type" value="Genomic_DNA"/>
</dbReference>
<dbReference type="PIR" id="T37984">
    <property type="entry name" value="T37984"/>
</dbReference>
<dbReference type="RefSeq" id="NP_595166.1">
    <property type="nucleotide sequence ID" value="NM_001021075.2"/>
</dbReference>
<dbReference type="SMR" id="Q10341"/>
<dbReference type="BioGRID" id="276451">
    <property type="interactions" value="2"/>
</dbReference>
<dbReference type="STRING" id="284812.Q10341"/>
<dbReference type="ESTHER" id="schpo-yblh">
    <property type="family name" value="Homoserine_transacetylase"/>
</dbReference>
<dbReference type="PaxDb" id="4896-SPBC106.17c.1"/>
<dbReference type="EnsemblFungi" id="SPBC106.17c.1">
    <property type="protein sequence ID" value="SPBC106.17c.1:pep"/>
    <property type="gene ID" value="SPBC106.17c"/>
</dbReference>
<dbReference type="GeneID" id="2539905"/>
<dbReference type="KEGG" id="spo:2539905"/>
<dbReference type="PomBase" id="SPBC106.17c">
    <property type="gene designation" value="cys2"/>
</dbReference>
<dbReference type="VEuPathDB" id="FungiDB:SPBC106.17c"/>
<dbReference type="eggNOG" id="ENOG502QR3J">
    <property type="taxonomic scope" value="Eukaryota"/>
</dbReference>
<dbReference type="HOGENOM" id="CLU_028760_7_0_1"/>
<dbReference type="InParanoid" id="Q10341"/>
<dbReference type="OMA" id="HPILVMG"/>
<dbReference type="PhylomeDB" id="Q10341"/>
<dbReference type="SABIO-RK" id="Q10341"/>
<dbReference type="UniPathway" id="UPA00136">
    <property type="reaction ID" value="UER00199"/>
</dbReference>
<dbReference type="PRO" id="PR:Q10341"/>
<dbReference type="Proteomes" id="UP000002485">
    <property type="component" value="Chromosome II"/>
</dbReference>
<dbReference type="GO" id="GO:0005739">
    <property type="term" value="C:mitochondrion"/>
    <property type="evidence" value="ECO:0007005"/>
    <property type="project" value="PomBase"/>
</dbReference>
<dbReference type="GO" id="GO:0160210">
    <property type="term" value="F:L-serine O-succinyltransferase activity"/>
    <property type="evidence" value="ECO:0000314"/>
    <property type="project" value="PomBase"/>
</dbReference>
<dbReference type="GO" id="GO:0009001">
    <property type="term" value="F:serine O-acetyltransferase activity"/>
    <property type="evidence" value="ECO:0000318"/>
    <property type="project" value="GO_Central"/>
</dbReference>
<dbReference type="GO" id="GO:0019344">
    <property type="term" value="P:cysteine biosynthetic process"/>
    <property type="evidence" value="ECO:0000315"/>
    <property type="project" value="PomBase"/>
</dbReference>
<dbReference type="GO" id="GO:0006535">
    <property type="term" value="P:cysteine biosynthetic process from serine"/>
    <property type="evidence" value="ECO:0000315"/>
    <property type="project" value="PomBase"/>
</dbReference>
<dbReference type="Gene3D" id="3.40.50.1820">
    <property type="entry name" value="alpha/beta hydrolase"/>
    <property type="match status" value="1"/>
</dbReference>
<dbReference type="HAMAP" id="MF_00296">
    <property type="entry name" value="MetX_acyltransf"/>
    <property type="match status" value="1"/>
</dbReference>
<dbReference type="InterPro" id="IPR000073">
    <property type="entry name" value="AB_hydrolase_1"/>
</dbReference>
<dbReference type="InterPro" id="IPR029058">
    <property type="entry name" value="AB_hydrolase_fold"/>
</dbReference>
<dbReference type="InterPro" id="IPR008220">
    <property type="entry name" value="HAT_MetX-like"/>
</dbReference>
<dbReference type="NCBIfam" id="TIGR01392">
    <property type="entry name" value="homoserO_Ac_trn"/>
    <property type="match status" value="1"/>
</dbReference>
<dbReference type="NCBIfam" id="NF001209">
    <property type="entry name" value="PRK00175.1"/>
    <property type="match status" value="1"/>
</dbReference>
<dbReference type="PANTHER" id="PTHR32268">
    <property type="entry name" value="HOMOSERINE O-ACETYLTRANSFERASE"/>
    <property type="match status" value="1"/>
</dbReference>
<dbReference type="PANTHER" id="PTHR32268:SF16">
    <property type="entry name" value="SERINE O-SUCCINYLTRANSFERASE"/>
    <property type="match status" value="1"/>
</dbReference>
<dbReference type="Pfam" id="PF00561">
    <property type="entry name" value="Abhydrolase_1"/>
    <property type="match status" value="1"/>
</dbReference>
<dbReference type="PIRSF" id="PIRSF000443">
    <property type="entry name" value="Homoser_Ac_trans"/>
    <property type="match status" value="1"/>
</dbReference>
<dbReference type="SUPFAM" id="SSF53474">
    <property type="entry name" value="alpha/beta-Hydrolases"/>
    <property type="match status" value="1"/>
</dbReference>
<keyword id="KW-0012">Acyltransferase</keyword>
<keyword id="KW-0028">Amino-acid biosynthesis</keyword>
<keyword id="KW-0198">Cysteine biosynthesis</keyword>
<keyword id="KW-0496">Mitochondrion</keyword>
<keyword id="KW-1185">Reference proteome</keyword>
<keyword id="KW-0808">Transferase</keyword>
<keyword id="KW-0809">Transit peptide</keyword>
<gene>
    <name evidence="7" type="primary">cys2</name>
    <name evidence="12" type="ORF">SPBC106.17c</name>
</gene>
<accession>Q10341</accession>
<sequence length="504" mass="56363">MLRASSKRLQLSWQVFRRFQSSNPQLSFPCVDQAQERSRQFEQSLQKQQACPNSVDPSASITSPSLSSGPEPVYGKIVSGFKKFYHNKPFLCDHGGILPKFEIAYETWGTLNKDHSNAILLHTGLSASSHAHSHPENTAPGWWEQFIGPGKDVDTNKFFVICTNVLGSCYGSTGPSSVDPGDGKHYATRFPIITVNDMIRAQLLLLDHLKIEKLYASVGSSLGGMQSLTLGALAPHRVGRIASISGGARSHPYSIALRFTQRQILMNDPYWNRGFYYDGVPPHTGMKLAREVATISYRSGPEWEQRFGNRRADPSVSPAFCPDFLIETYLDHAGEKFCLQYDPNSLLYISKAMDMHDMSASHQRSLSENRKKNQHKLDKYLSADVSAEEIIKLNEDTSVLPDVPYQEIANEDRAPEPDPETNLIAGLAPLKDTPVMVMGVESDNLMPVECQRETARCLEKAGNKQVVYHELDANESFYGHDTFLIYRKDLDLVGGKLKKFLELS</sequence>
<comment type="function">
    <text evidence="6">Transfers a succinyl group from succinyl-CoA to L-serine, forming succinyl-L-serine. Also has weak serine acetyl transferase activity and homoserine succinyl transferase activity.</text>
</comment>
<comment type="catalytic activity">
    <reaction evidence="6">
        <text>succinyl-CoA + L-serine = O-succinyl-L-serine + CoA</text>
        <dbReference type="Rhea" id="RHEA:52820"/>
        <dbReference type="ChEBI" id="CHEBI:33384"/>
        <dbReference type="ChEBI" id="CHEBI:57287"/>
        <dbReference type="ChEBI" id="CHEBI:57292"/>
        <dbReference type="ChEBI" id="CHEBI:136856"/>
    </reaction>
</comment>
<comment type="biophysicochemical properties">
    <kinetics>
        <KM evidence="6">1.2 mM for L-serine</KM>
        <KM evidence="6">0.025 mM for succinyl-CoA</KM>
        <KM evidence="6">0.045 mM for acetyl-CoA</KM>
        <KM evidence="6">738 mM for L-homoserine</KM>
        <text evidence="6">kcat is 7.4 sec(-1) with L-serine and succinyl-CoA as substrates. kcat is 0.2 sec(-1) with acetyl-CoA as substrate (in the presence of L-serine). kcat is 13.8 sec(-1) with L-homoserine as substrate (in the presence of succinyl-CoA).</text>
    </kinetics>
</comment>
<comment type="pathway">
    <text evidence="10 11">Amino-acid biosynthesis; L-cysteine biosynthesis; L-cysteine from L-serine: step 1/2.</text>
</comment>
<comment type="subcellular location">
    <subcellularLocation>
        <location evidence="4">Mitochondrion</location>
    </subcellularLocation>
</comment>
<comment type="similarity">
    <text evidence="9">Belongs to the AB hydrolase superfamily. MetX family.</text>
</comment>
<name>SST_SCHPO</name>
<feature type="transit peptide" description="Mitochondrion" evidence="2">
    <location>
        <begin position="1"/>
        <end position="26"/>
    </location>
</feature>
<feature type="chain" id="PRO_0000155759" description="Serine O-succinyltransferase" evidence="2">
    <location>
        <begin position="27"/>
        <end position="504"/>
    </location>
</feature>
<feature type="domain" description="AB hydrolase-1" evidence="2">
    <location>
        <begin position="117"/>
        <end position="395"/>
    </location>
</feature>
<feature type="region of interest" description="Disordered" evidence="3">
    <location>
        <begin position="49"/>
        <end position="70"/>
    </location>
</feature>
<feature type="region of interest" description="Important for substrate specificity" evidence="11">
    <location>
        <begin position="124"/>
        <end position="127"/>
    </location>
</feature>
<feature type="compositionally biased region" description="Low complexity" evidence="3">
    <location>
        <begin position="57"/>
        <end position="70"/>
    </location>
</feature>
<feature type="active site" description="Nucleophile" evidence="1">
    <location>
        <position position="221"/>
    </location>
</feature>
<feature type="active site" evidence="1">
    <location>
        <position position="443"/>
    </location>
</feature>
<feature type="active site" evidence="1">
    <location>
        <position position="480"/>
    </location>
</feature>
<feature type="binding site" evidence="1">
    <location>
        <position position="290"/>
    </location>
    <ligand>
        <name>substrate</name>
    </ligand>
</feature>
<feature type="binding site" evidence="1">
    <location>
        <position position="481"/>
    </location>
    <ligand>
        <name>substrate</name>
    </ligand>
</feature>
<feature type="site" description="Important for acyl-CoA specificity" evidence="11">
    <location>
        <position position="258"/>
    </location>
</feature>
<feature type="mutagenesis site" description="In cys2-1: Leads to auxotrophy for cysteine." evidence="5">
    <original>G</original>
    <variation>D</variation>
    <location>
        <position position="426"/>
    </location>
</feature>
<evidence type="ECO:0000250" key="1">
    <source>
        <dbReference type="UniProtKB" id="P45131"/>
    </source>
</evidence>
<evidence type="ECO:0000255" key="2"/>
<evidence type="ECO:0000256" key="3">
    <source>
        <dbReference type="SAM" id="MobiDB-lite"/>
    </source>
</evidence>
<evidence type="ECO:0000269" key="4">
    <source>
    </source>
</evidence>
<evidence type="ECO:0000269" key="5">
    <source>
    </source>
</evidence>
<evidence type="ECO:0000269" key="6">
    <source>
    </source>
</evidence>
<evidence type="ECO:0000303" key="7">
    <source>
    </source>
</evidence>
<evidence type="ECO:0000303" key="8">
    <source>
    </source>
</evidence>
<evidence type="ECO:0000305" key="9"/>
<evidence type="ECO:0000305" key="10">
    <source>
    </source>
</evidence>
<evidence type="ECO:0000305" key="11">
    <source>
    </source>
</evidence>
<evidence type="ECO:0000312" key="12">
    <source>
        <dbReference type="PomBase" id="SPBC106.17c"/>
    </source>
</evidence>